<sequence length="216" mass="24000">MFKFLKRIKDDVNMVFEQDPAARTTLEVITSYAGVHAVWSHLIAHELYKKKKYVLARLISQVTRFFTGIEIHPGAQIGRRLFIDHGMGVVIGETCRIGDNVTIYQGVTLGGTGKERGKRHPDIGDNVLIAAGAKVLGNITINANVNIGANSVVLNSVPSYSTVVGIPGHIVKQDGRRIGKTFDHRNLPDPIYEQLKELEKQLEKTRNGEIQDDYII</sequence>
<organism>
    <name type="scientific">Staphylococcus xylosus</name>
    <dbReference type="NCBI Taxonomy" id="1288"/>
    <lineage>
        <taxon>Bacteria</taxon>
        <taxon>Bacillati</taxon>
        <taxon>Bacillota</taxon>
        <taxon>Bacilli</taxon>
        <taxon>Bacillales</taxon>
        <taxon>Staphylococcaceae</taxon>
        <taxon>Staphylococcus</taxon>
    </lineage>
</organism>
<gene>
    <name type="primary">cysE</name>
</gene>
<protein>
    <recommendedName>
        <fullName>Serine acetyltransferase</fullName>
        <shortName>SAT</shortName>
        <ecNumber>2.3.1.30</ecNumber>
    </recommendedName>
</protein>
<dbReference type="EC" id="2.3.1.30"/>
<dbReference type="EMBL" id="Y07614">
    <property type="protein sequence ID" value="CAA68887.1"/>
    <property type="molecule type" value="Genomic_DNA"/>
</dbReference>
<dbReference type="SMR" id="P77985"/>
<dbReference type="STRING" id="1288.AWC37_00060"/>
<dbReference type="eggNOG" id="COG1045">
    <property type="taxonomic scope" value="Bacteria"/>
</dbReference>
<dbReference type="OrthoDB" id="9801456at2"/>
<dbReference type="UniPathway" id="UPA00136">
    <property type="reaction ID" value="UER00199"/>
</dbReference>
<dbReference type="GO" id="GO:0005737">
    <property type="term" value="C:cytoplasm"/>
    <property type="evidence" value="ECO:0007669"/>
    <property type="project" value="UniProtKB-SubCell"/>
</dbReference>
<dbReference type="GO" id="GO:0009001">
    <property type="term" value="F:serine O-acetyltransferase activity"/>
    <property type="evidence" value="ECO:0007669"/>
    <property type="project" value="UniProtKB-EC"/>
</dbReference>
<dbReference type="GO" id="GO:0006535">
    <property type="term" value="P:cysteine biosynthetic process from serine"/>
    <property type="evidence" value="ECO:0007669"/>
    <property type="project" value="InterPro"/>
</dbReference>
<dbReference type="CDD" id="cd03354">
    <property type="entry name" value="LbH_SAT"/>
    <property type="match status" value="1"/>
</dbReference>
<dbReference type="FunFam" id="1.10.3130.10:FF:000002">
    <property type="entry name" value="Serine acetyltransferase"/>
    <property type="match status" value="1"/>
</dbReference>
<dbReference type="FunFam" id="2.160.10.10:FF:000007">
    <property type="entry name" value="Serine acetyltransferase"/>
    <property type="match status" value="1"/>
</dbReference>
<dbReference type="Gene3D" id="2.160.10.10">
    <property type="entry name" value="Hexapeptide repeat proteins"/>
    <property type="match status" value="1"/>
</dbReference>
<dbReference type="Gene3D" id="1.10.3130.10">
    <property type="entry name" value="serine acetyltransferase, domain 1"/>
    <property type="match status" value="1"/>
</dbReference>
<dbReference type="InterPro" id="IPR001451">
    <property type="entry name" value="Hexapep"/>
</dbReference>
<dbReference type="InterPro" id="IPR045304">
    <property type="entry name" value="LbH_SAT"/>
</dbReference>
<dbReference type="InterPro" id="IPR042122">
    <property type="entry name" value="Ser_AcTrfase_N_sf"/>
</dbReference>
<dbReference type="InterPro" id="IPR005881">
    <property type="entry name" value="Ser_O-AcTrfase"/>
</dbReference>
<dbReference type="InterPro" id="IPR053376">
    <property type="entry name" value="Serine_acetyltransferase"/>
</dbReference>
<dbReference type="InterPro" id="IPR011004">
    <property type="entry name" value="Trimer_LpxA-like_sf"/>
</dbReference>
<dbReference type="NCBIfam" id="TIGR01172">
    <property type="entry name" value="cysE"/>
    <property type="match status" value="1"/>
</dbReference>
<dbReference type="NCBIfam" id="NF041874">
    <property type="entry name" value="EPS_EpsC"/>
    <property type="match status" value="1"/>
</dbReference>
<dbReference type="PANTHER" id="PTHR42811">
    <property type="entry name" value="SERINE ACETYLTRANSFERASE"/>
    <property type="match status" value="1"/>
</dbReference>
<dbReference type="Pfam" id="PF00132">
    <property type="entry name" value="Hexapep"/>
    <property type="match status" value="1"/>
</dbReference>
<dbReference type="PIRSF" id="PIRSF000441">
    <property type="entry name" value="CysE"/>
    <property type="match status" value="1"/>
</dbReference>
<dbReference type="SUPFAM" id="SSF51161">
    <property type="entry name" value="Trimeric LpxA-like enzymes"/>
    <property type="match status" value="1"/>
</dbReference>
<reference key="1">
    <citation type="journal article" date="1997" name="FEMS Microbiol. Lett.">
        <title>Identification of the serine acetyltransferase gene of Staphylococcus xylosus.</title>
        <authorList>
            <person name="Fiegler H."/>
            <person name="Brueckner R."/>
        </authorList>
    </citation>
    <scope>NUCLEOTIDE SEQUENCE [GENOMIC DNA]</scope>
    <source>
        <strain>DSM 20267 / Isolate C2A</strain>
    </source>
</reference>
<evidence type="ECO:0000305" key="1"/>
<proteinExistence type="inferred from homology"/>
<feature type="chain" id="PRO_0000068685" description="Serine acetyltransferase">
    <location>
        <begin position="1"/>
        <end position="216"/>
    </location>
</feature>
<name>CYSE_STAXY</name>
<comment type="catalytic activity">
    <reaction>
        <text>L-serine + acetyl-CoA = O-acetyl-L-serine + CoA</text>
        <dbReference type="Rhea" id="RHEA:24560"/>
        <dbReference type="ChEBI" id="CHEBI:33384"/>
        <dbReference type="ChEBI" id="CHEBI:57287"/>
        <dbReference type="ChEBI" id="CHEBI:57288"/>
        <dbReference type="ChEBI" id="CHEBI:58340"/>
        <dbReference type="EC" id="2.3.1.30"/>
    </reaction>
</comment>
<comment type="pathway">
    <text>Amino-acid biosynthesis; L-cysteine biosynthesis; L-cysteine from L-serine: step 1/2.</text>
</comment>
<comment type="subcellular location">
    <subcellularLocation>
        <location>Cytoplasm</location>
    </subcellularLocation>
</comment>
<comment type="similarity">
    <text evidence="1">Belongs to the transferase hexapeptide repeat family.</text>
</comment>
<accession>P77985</accession>
<keyword id="KW-0012">Acyltransferase</keyword>
<keyword id="KW-0028">Amino-acid biosynthesis</keyword>
<keyword id="KW-0198">Cysteine biosynthesis</keyword>
<keyword id="KW-0963">Cytoplasm</keyword>
<keyword id="KW-0677">Repeat</keyword>
<keyword id="KW-0808">Transferase</keyword>